<evidence type="ECO:0000250" key="1">
    <source>
        <dbReference type="UniProtKB" id="P04628"/>
    </source>
</evidence>
<evidence type="ECO:0000250" key="2">
    <source>
        <dbReference type="UniProtKB" id="P28026"/>
    </source>
</evidence>
<evidence type="ECO:0000250" key="3">
    <source>
        <dbReference type="UniProtKB" id="P56704"/>
    </source>
</evidence>
<evidence type="ECO:0000250" key="4">
    <source>
        <dbReference type="UniProtKB" id="Q91029"/>
    </source>
</evidence>
<evidence type="ECO:0000255" key="5"/>
<evidence type="ECO:0000269" key="6">
    <source>
    </source>
</evidence>
<evidence type="ECO:0000269" key="7">
    <source>
    </source>
</evidence>
<evidence type="ECO:0000269" key="8">
    <source>
    </source>
</evidence>
<evidence type="ECO:0000269" key="9">
    <source>
    </source>
</evidence>
<evidence type="ECO:0000269" key="10">
    <source>
    </source>
</evidence>
<evidence type="ECO:0000269" key="11">
    <source>
    </source>
</evidence>
<evidence type="ECO:0000269" key="12">
    <source>
    </source>
</evidence>
<evidence type="ECO:0000269" key="13">
    <source>
    </source>
</evidence>
<evidence type="ECO:0000269" key="14">
    <source>
    </source>
</evidence>
<evidence type="ECO:0000269" key="15">
    <source>
    </source>
</evidence>
<evidence type="ECO:0000269" key="16">
    <source>
    </source>
</evidence>
<evidence type="ECO:0000303" key="17">
    <source>
    </source>
</evidence>
<evidence type="ECO:0000303" key="18">
    <source>
    </source>
</evidence>
<evidence type="ECO:0000303" key="19">
    <source>
    </source>
</evidence>
<evidence type="ECO:0000305" key="20"/>
<proteinExistence type="evidence at protein level"/>
<protein>
    <recommendedName>
        <fullName>Proto-oncogene Wnt-1</fullName>
    </recommendedName>
    <alternativeName>
        <fullName evidence="17 19">Proto-oncogene Int-1</fullName>
    </alternativeName>
</protein>
<name>WNT1_MOUSE</name>
<gene>
    <name type="primary">Wnt1</name>
    <name evidence="17 18 19" type="synonym">Int-1</name>
    <name type="synonym">Wnt-1</name>
</gene>
<dbReference type="EMBL" id="K02593">
    <property type="protein sequence ID" value="AAA39321.1"/>
    <property type="molecule type" value="Genomic_DNA"/>
</dbReference>
<dbReference type="EMBL" id="M11943">
    <property type="protein sequence ID" value="AAA39322.1"/>
    <property type="molecule type" value="mRNA"/>
</dbReference>
<dbReference type="EMBL" id="BC005449">
    <property type="protein sequence ID" value="AAH05449.1"/>
    <property type="molecule type" value="mRNA"/>
</dbReference>
<dbReference type="CCDS" id="CCDS27807.1"/>
<dbReference type="PIR" id="A23447">
    <property type="entry name" value="TVMST1"/>
</dbReference>
<dbReference type="RefSeq" id="NP_067254.1">
    <property type="nucleotide sequence ID" value="NM_021279.4"/>
</dbReference>
<dbReference type="SMR" id="P04426"/>
<dbReference type="BioGRID" id="204567">
    <property type="interactions" value="9"/>
</dbReference>
<dbReference type="CORUM" id="P04426"/>
<dbReference type="DIP" id="DIP-39896N"/>
<dbReference type="FunCoup" id="P04426">
    <property type="interactions" value="410"/>
</dbReference>
<dbReference type="IntAct" id="P04426">
    <property type="interactions" value="4"/>
</dbReference>
<dbReference type="STRING" id="10090.ENSMUSP00000023734"/>
<dbReference type="GlyCosmos" id="P04426">
    <property type="glycosylation" value="4 sites, No reported glycans"/>
</dbReference>
<dbReference type="GlyGen" id="P04426">
    <property type="glycosylation" value="5 sites"/>
</dbReference>
<dbReference type="iPTMnet" id="P04426"/>
<dbReference type="PhosphoSitePlus" id="P04426"/>
<dbReference type="SwissPalm" id="P04426"/>
<dbReference type="PaxDb" id="10090-ENSMUSP00000023734"/>
<dbReference type="Antibodypedia" id="13738">
    <property type="antibodies" value="531 antibodies from 42 providers"/>
</dbReference>
<dbReference type="DNASU" id="22408"/>
<dbReference type="Ensembl" id="ENSMUST00000023734.8">
    <property type="protein sequence ID" value="ENSMUSP00000023734.8"/>
    <property type="gene ID" value="ENSMUSG00000022997.10"/>
</dbReference>
<dbReference type="GeneID" id="22408"/>
<dbReference type="KEGG" id="mmu:22408"/>
<dbReference type="UCSC" id="uc007xnx.1">
    <property type="organism name" value="mouse"/>
</dbReference>
<dbReference type="AGR" id="MGI:98953"/>
<dbReference type="CTD" id="7471"/>
<dbReference type="MGI" id="MGI:98953">
    <property type="gene designation" value="Wnt1"/>
</dbReference>
<dbReference type="VEuPathDB" id="HostDB:ENSMUSG00000022997"/>
<dbReference type="eggNOG" id="KOG3913">
    <property type="taxonomic scope" value="Eukaryota"/>
</dbReference>
<dbReference type="GeneTree" id="ENSGT00940000160329"/>
<dbReference type="HOGENOM" id="CLU_033039_1_1_1"/>
<dbReference type="InParanoid" id="P04426"/>
<dbReference type="OMA" id="NDHMPDI"/>
<dbReference type="OrthoDB" id="5945655at2759"/>
<dbReference type="PhylomeDB" id="P04426"/>
<dbReference type="TreeFam" id="TF105310"/>
<dbReference type="Reactome" id="R-MMU-201681">
    <property type="pathway name" value="TCF dependent signaling in response to WNT"/>
</dbReference>
<dbReference type="Reactome" id="R-MMU-3238698">
    <property type="pathway name" value="WNT ligand biogenesis and trafficking"/>
</dbReference>
<dbReference type="Reactome" id="R-MMU-4086400">
    <property type="pathway name" value="PCP/CE pathway"/>
</dbReference>
<dbReference type="Reactome" id="R-MMU-4641262">
    <property type="pathway name" value="Disassembly of the destruction complex and recruitment of AXIN to the membrane"/>
</dbReference>
<dbReference type="BioGRID-ORCS" id="22408">
    <property type="hits" value="1 hit in 79 CRISPR screens"/>
</dbReference>
<dbReference type="ChiTaRS" id="Wnt1">
    <property type="organism name" value="mouse"/>
</dbReference>
<dbReference type="PRO" id="PR:P04426"/>
<dbReference type="Proteomes" id="UP000000589">
    <property type="component" value="Chromosome 15"/>
</dbReference>
<dbReference type="RNAct" id="P04426">
    <property type="molecule type" value="protein"/>
</dbReference>
<dbReference type="Bgee" id="ENSMUSG00000022997">
    <property type="expression patterns" value="Expressed in presumptive midbrain and 58 other cell types or tissues"/>
</dbReference>
<dbReference type="ExpressionAtlas" id="P04426">
    <property type="expression patterns" value="baseline and differential"/>
</dbReference>
<dbReference type="GO" id="GO:0009986">
    <property type="term" value="C:cell surface"/>
    <property type="evidence" value="ECO:0000314"/>
    <property type="project" value="MGI"/>
</dbReference>
<dbReference type="GO" id="GO:0005788">
    <property type="term" value="C:endoplasmic reticulum lumen"/>
    <property type="evidence" value="ECO:0000304"/>
    <property type="project" value="Reactome"/>
</dbReference>
<dbReference type="GO" id="GO:0005576">
    <property type="term" value="C:extracellular region"/>
    <property type="evidence" value="ECO:0000314"/>
    <property type="project" value="ParkinsonsUK-UCL"/>
</dbReference>
<dbReference type="GO" id="GO:1990909">
    <property type="term" value="C:Wnt signalosome"/>
    <property type="evidence" value="ECO:0000305"/>
    <property type="project" value="ParkinsonsUK-UCL"/>
</dbReference>
<dbReference type="GO" id="GO:0005125">
    <property type="term" value="F:cytokine activity"/>
    <property type="evidence" value="ECO:0000314"/>
    <property type="project" value="BHF-UCL"/>
</dbReference>
<dbReference type="GO" id="GO:0019904">
    <property type="term" value="F:protein domain specific binding"/>
    <property type="evidence" value="ECO:0000353"/>
    <property type="project" value="UniProtKB"/>
</dbReference>
<dbReference type="GO" id="GO:0048018">
    <property type="term" value="F:receptor ligand activity"/>
    <property type="evidence" value="ECO:0000314"/>
    <property type="project" value="ParkinsonsUK-UCL"/>
</dbReference>
<dbReference type="GO" id="GO:0005102">
    <property type="term" value="F:signaling receptor binding"/>
    <property type="evidence" value="ECO:0000353"/>
    <property type="project" value="BHF-UCL"/>
</dbReference>
<dbReference type="GO" id="GO:0009887">
    <property type="term" value="P:animal organ morphogenesis"/>
    <property type="evidence" value="ECO:0000304"/>
    <property type="project" value="MGI"/>
</dbReference>
<dbReference type="GO" id="GO:0031100">
    <property type="term" value="P:animal organ regeneration"/>
    <property type="evidence" value="ECO:0007669"/>
    <property type="project" value="Ensembl"/>
</dbReference>
<dbReference type="GO" id="GO:0036520">
    <property type="term" value="P:astrocyte-dopaminergic neuron signaling"/>
    <property type="evidence" value="ECO:0000315"/>
    <property type="project" value="ParkinsonsUK-UCL"/>
</dbReference>
<dbReference type="GO" id="GO:0030509">
    <property type="term" value="P:BMP signaling pathway"/>
    <property type="evidence" value="ECO:0000266"/>
    <property type="project" value="MGI"/>
</dbReference>
<dbReference type="GO" id="GO:0060348">
    <property type="term" value="P:bone development"/>
    <property type="evidence" value="ECO:0000250"/>
    <property type="project" value="UniProtKB"/>
</dbReference>
<dbReference type="GO" id="GO:0001658">
    <property type="term" value="P:branching involved in ureteric bud morphogenesis"/>
    <property type="evidence" value="ECO:0000316"/>
    <property type="project" value="MGI"/>
</dbReference>
<dbReference type="GO" id="GO:0060070">
    <property type="term" value="P:canonical Wnt signaling pathway"/>
    <property type="evidence" value="ECO:0000314"/>
    <property type="project" value="BHF-UCL"/>
</dbReference>
<dbReference type="GO" id="GO:0008283">
    <property type="term" value="P:cell population proliferation"/>
    <property type="evidence" value="ECO:0000314"/>
    <property type="project" value="MGI"/>
</dbReference>
<dbReference type="GO" id="GO:0033278">
    <property type="term" value="P:cell proliferation in midbrain"/>
    <property type="evidence" value="ECO:0000314"/>
    <property type="project" value="ParkinsonsUK-UCL"/>
</dbReference>
<dbReference type="GO" id="GO:0007267">
    <property type="term" value="P:cell-cell signaling"/>
    <property type="evidence" value="ECO:0000314"/>
    <property type="project" value="BHF-UCL"/>
</dbReference>
<dbReference type="GO" id="GO:0071375">
    <property type="term" value="P:cellular response to peptide hormone stimulus"/>
    <property type="evidence" value="ECO:0007669"/>
    <property type="project" value="Ensembl"/>
</dbReference>
<dbReference type="GO" id="GO:0021551">
    <property type="term" value="P:central nervous system morphogenesis"/>
    <property type="evidence" value="ECO:0000315"/>
    <property type="project" value="BHF-UCL"/>
</dbReference>
<dbReference type="GO" id="GO:0021549">
    <property type="term" value="P:cerebellum development"/>
    <property type="evidence" value="ECO:0000315"/>
    <property type="project" value="ParkinsonsUK-UCL"/>
</dbReference>
<dbReference type="GO" id="GO:0021588">
    <property type="term" value="P:cerebellum formation"/>
    <property type="evidence" value="ECO:0000315"/>
    <property type="project" value="BHF-UCL"/>
</dbReference>
<dbReference type="GO" id="GO:0021536">
    <property type="term" value="P:diencephalon development"/>
    <property type="evidence" value="ECO:0000316"/>
    <property type="project" value="MGI"/>
</dbReference>
<dbReference type="GO" id="GO:0071542">
    <property type="term" value="P:dopaminergic neuron differentiation"/>
    <property type="evidence" value="ECO:0000315"/>
    <property type="project" value="CACAO"/>
</dbReference>
<dbReference type="GO" id="GO:0000578">
    <property type="term" value="P:embryonic axis specification"/>
    <property type="evidence" value="ECO:0000315"/>
    <property type="project" value="BHF-UCL"/>
</dbReference>
<dbReference type="GO" id="GO:1990403">
    <property type="term" value="P:embryonic brain development"/>
    <property type="evidence" value="ECO:0000314"/>
    <property type="project" value="ParkinsonsUK-UCL"/>
</dbReference>
<dbReference type="GO" id="GO:0045444">
    <property type="term" value="P:fat cell differentiation"/>
    <property type="evidence" value="ECO:0000314"/>
    <property type="project" value="MGI"/>
</dbReference>
<dbReference type="GO" id="GO:0021797">
    <property type="term" value="P:forebrain anterior/posterior pattern specification"/>
    <property type="evidence" value="ECO:0000316"/>
    <property type="project" value="MGI"/>
</dbReference>
<dbReference type="GO" id="GO:0071425">
    <property type="term" value="P:hematopoietic stem cell proliferation"/>
    <property type="evidence" value="ECO:0000314"/>
    <property type="project" value="MGI"/>
</dbReference>
<dbReference type="GO" id="GO:0070365">
    <property type="term" value="P:hepatocyte differentiation"/>
    <property type="evidence" value="ECO:0007669"/>
    <property type="project" value="Ensembl"/>
</dbReference>
<dbReference type="GO" id="GO:0042472">
    <property type="term" value="P:inner ear morphogenesis"/>
    <property type="evidence" value="ECO:0000316"/>
    <property type="project" value="MGI"/>
</dbReference>
<dbReference type="GO" id="GO:0022037">
    <property type="term" value="P:metencephalon development"/>
    <property type="evidence" value="ECO:0000315"/>
    <property type="project" value="MGI"/>
</dbReference>
<dbReference type="GO" id="GO:0030901">
    <property type="term" value="P:midbrain development"/>
    <property type="evidence" value="ECO:0000314"/>
    <property type="project" value="ParkinsonsUK-UCL"/>
</dbReference>
<dbReference type="GO" id="GO:1904948">
    <property type="term" value="P:midbrain dopaminergic neuron differentiation"/>
    <property type="evidence" value="ECO:0000314"/>
    <property type="project" value="ParkinsonsUK-UCL"/>
</dbReference>
<dbReference type="GO" id="GO:0030917">
    <property type="term" value="P:midbrain-hindbrain boundary development"/>
    <property type="evidence" value="ECO:0000315"/>
    <property type="project" value="MGI"/>
</dbReference>
<dbReference type="GO" id="GO:0022004">
    <property type="term" value="P:midbrain-hindbrain boundary maturation during brain development"/>
    <property type="evidence" value="ECO:0000315"/>
    <property type="project" value="MGI"/>
</dbReference>
<dbReference type="GO" id="GO:0007520">
    <property type="term" value="P:myoblast fusion"/>
    <property type="evidence" value="ECO:0000314"/>
    <property type="project" value="MGI"/>
</dbReference>
<dbReference type="GO" id="GO:0014902">
    <property type="term" value="P:myotube differentiation"/>
    <property type="evidence" value="ECO:0000316"/>
    <property type="project" value="MGI"/>
</dbReference>
<dbReference type="GO" id="GO:0030514">
    <property type="term" value="P:negative regulation of BMP signaling pathway"/>
    <property type="evidence" value="ECO:0007669"/>
    <property type="project" value="Ensembl"/>
</dbReference>
<dbReference type="GO" id="GO:0045596">
    <property type="term" value="P:negative regulation of cell differentiation"/>
    <property type="evidence" value="ECO:0000315"/>
    <property type="project" value="AgBase"/>
</dbReference>
<dbReference type="GO" id="GO:0022408">
    <property type="term" value="P:negative regulation of cell-cell adhesion"/>
    <property type="evidence" value="ECO:0007669"/>
    <property type="project" value="Ensembl"/>
</dbReference>
<dbReference type="GO" id="GO:0010812">
    <property type="term" value="P:negative regulation of cell-substrate adhesion"/>
    <property type="evidence" value="ECO:0007669"/>
    <property type="project" value="Ensembl"/>
</dbReference>
<dbReference type="GO" id="GO:2000773">
    <property type="term" value="P:negative regulation of cellular senescence"/>
    <property type="evidence" value="ECO:0007669"/>
    <property type="project" value="Ensembl"/>
</dbReference>
<dbReference type="GO" id="GO:0045599">
    <property type="term" value="P:negative regulation of fat cell differentiation"/>
    <property type="evidence" value="ECO:0000314"/>
    <property type="project" value="MGI"/>
</dbReference>
<dbReference type="GO" id="GO:1903377">
    <property type="term" value="P:negative regulation of oxidative stress-induced neuron intrinsic apoptotic signaling pathway"/>
    <property type="evidence" value="ECO:0000315"/>
    <property type="project" value="ParkinsonsUK-UCL"/>
</dbReference>
<dbReference type="GO" id="GO:0030512">
    <property type="term" value="P:negative regulation of transforming growth factor beta receptor signaling pathway"/>
    <property type="evidence" value="ECO:0000314"/>
    <property type="project" value="MGI"/>
</dbReference>
<dbReference type="GO" id="GO:2000059">
    <property type="term" value="P:negative regulation of ubiquitin-dependent protein catabolic process"/>
    <property type="evidence" value="ECO:0000314"/>
    <property type="project" value="MGI"/>
</dbReference>
<dbReference type="GO" id="GO:0022008">
    <property type="term" value="P:neurogenesis"/>
    <property type="evidence" value="ECO:0000314"/>
    <property type="project" value="ParkinsonsUK-UCL"/>
</dbReference>
<dbReference type="GO" id="GO:0048663">
    <property type="term" value="P:neuron fate commitment"/>
    <property type="evidence" value="ECO:0000315"/>
    <property type="project" value="MGI"/>
</dbReference>
<dbReference type="GO" id="GO:0048664">
    <property type="term" value="P:neuron fate determination"/>
    <property type="evidence" value="ECO:0000315"/>
    <property type="project" value="MGI"/>
</dbReference>
<dbReference type="GO" id="GO:0008284">
    <property type="term" value="P:positive regulation of cell population proliferation"/>
    <property type="evidence" value="ECO:0000304"/>
    <property type="project" value="ParkinsonsUK-UCL"/>
</dbReference>
<dbReference type="GO" id="GO:0061184">
    <property type="term" value="P:positive regulation of dermatome development"/>
    <property type="evidence" value="ECO:0007669"/>
    <property type="project" value="Ensembl"/>
</dbReference>
<dbReference type="GO" id="GO:0045893">
    <property type="term" value="P:positive regulation of DNA-templated transcription"/>
    <property type="evidence" value="ECO:0000314"/>
    <property type="project" value="UniProtKB"/>
</dbReference>
<dbReference type="GO" id="GO:0048146">
    <property type="term" value="P:positive regulation of fibroblast proliferation"/>
    <property type="evidence" value="ECO:0007669"/>
    <property type="project" value="Ensembl"/>
</dbReference>
<dbReference type="GO" id="GO:1902035">
    <property type="term" value="P:positive regulation of hematopoietic stem cell proliferation"/>
    <property type="evidence" value="ECO:0000314"/>
    <property type="project" value="MGI"/>
</dbReference>
<dbReference type="GO" id="GO:0043568">
    <property type="term" value="P:positive regulation of insulin-like growth factor receptor signaling pathway"/>
    <property type="evidence" value="ECO:0007669"/>
    <property type="project" value="Ensembl"/>
</dbReference>
<dbReference type="GO" id="GO:0010592">
    <property type="term" value="P:positive regulation of lamellipodium assembly"/>
    <property type="evidence" value="ECO:0007669"/>
    <property type="project" value="Ensembl"/>
</dbReference>
<dbReference type="GO" id="GO:0045747">
    <property type="term" value="P:positive regulation of Notch signaling pathway"/>
    <property type="evidence" value="ECO:0007669"/>
    <property type="project" value="Ensembl"/>
</dbReference>
<dbReference type="GO" id="GO:0045944">
    <property type="term" value="P:positive regulation of transcription by RNA polymerase II"/>
    <property type="evidence" value="ECO:0000314"/>
    <property type="project" value="ParkinsonsUK-UCL"/>
</dbReference>
<dbReference type="GO" id="GO:0006355">
    <property type="term" value="P:regulation of DNA-templated transcription"/>
    <property type="evidence" value="ECO:0000304"/>
    <property type="project" value="ParkinsonsUK-UCL"/>
</dbReference>
<dbReference type="GO" id="GO:0009611">
    <property type="term" value="P:response to wounding"/>
    <property type="evidence" value="ECO:0007669"/>
    <property type="project" value="Ensembl"/>
</dbReference>
<dbReference type="GO" id="GO:0007165">
    <property type="term" value="P:signal transduction"/>
    <property type="evidence" value="ECO:0000304"/>
    <property type="project" value="MGI"/>
</dbReference>
<dbReference type="GO" id="GO:0042770">
    <property type="term" value="P:signal transduction in response to DNA damage"/>
    <property type="evidence" value="ECO:0007669"/>
    <property type="project" value="Ensembl"/>
</dbReference>
<dbReference type="GO" id="GO:0060061">
    <property type="term" value="P:Spemann organizer formation"/>
    <property type="evidence" value="ECO:0000315"/>
    <property type="project" value="BHF-UCL"/>
</dbReference>
<dbReference type="GO" id="GO:0021527">
    <property type="term" value="P:spinal cord association neuron differentiation"/>
    <property type="evidence" value="ECO:0000316"/>
    <property type="project" value="MGI"/>
</dbReference>
<dbReference type="GO" id="GO:0033077">
    <property type="term" value="P:T cell differentiation in thymus"/>
    <property type="evidence" value="ECO:0000314"/>
    <property type="project" value="MGI"/>
</dbReference>
<dbReference type="GO" id="GO:0016055">
    <property type="term" value="P:Wnt signaling pathway"/>
    <property type="evidence" value="ECO:0000314"/>
    <property type="project" value="ParkinsonsUK-UCL"/>
</dbReference>
<dbReference type="CDD" id="cd19333">
    <property type="entry name" value="Wnt_Wnt1"/>
    <property type="match status" value="1"/>
</dbReference>
<dbReference type="FunFam" id="3.30.2460.20:FF:000001">
    <property type="entry name" value="Wnt homolog"/>
    <property type="match status" value="1"/>
</dbReference>
<dbReference type="Gene3D" id="3.30.2460.20">
    <property type="match status" value="1"/>
</dbReference>
<dbReference type="InterPro" id="IPR005817">
    <property type="entry name" value="Wnt"/>
</dbReference>
<dbReference type="InterPro" id="IPR009139">
    <property type="entry name" value="Wnt1"/>
</dbReference>
<dbReference type="InterPro" id="IPR043158">
    <property type="entry name" value="Wnt_C"/>
</dbReference>
<dbReference type="InterPro" id="IPR018161">
    <property type="entry name" value="Wnt_CS"/>
</dbReference>
<dbReference type="PANTHER" id="PTHR12027:SF91">
    <property type="entry name" value="PROTO-ONCOGENE WNT-1"/>
    <property type="match status" value="1"/>
</dbReference>
<dbReference type="PANTHER" id="PTHR12027">
    <property type="entry name" value="WNT RELATED"/>
    <property type="match status" value="1"/>
</dbReference>
<dbReference type="Pfam" id="PF00110">
    <property type="entry name" value="wnt"/>
    <property type="match status" value="1"/>
</dbReference>
<dbReference type="PRINTS" id="PR01841">
    <property type="entry name" value="WNT1PROTEIN"/>
</dbReference>
<dbReference type="PRINTS" id="PR01349">
    <property type="entry name" value="WNTPROTEIN"/>
</dbReference>
<dbReference type="SMART" id="SM00097">
    <property type="entry name" value="WNT1"/>
    <property type="match status" value="1"/>
</dbReference>
<dbReference type="PROSITE" id="PS00246">
    <property type="entry name" value="WNT1"/>
    <property type="match status" value="1"/>
</dbReference>
<keyword id="KW-0217">Developmental protein</keyword>
<keyword id="KW-1015">Disulfide bond</keyword>
<keyword id="KW-0272">Extracellular matrix</keyword>
<keyword id="KW-0325">Glycoprotein</keyword>
<keyword id="KW-0449">Lipoprotein</keyword>
<keyword id="KW-0656">Proto-oncogene</keyword>
<keyword id="KW-1185">Reference proteome</keyword>
<keyword id="KW-0964">Secreted</keyword>
<keyword id="KW-0732">Signal</keyword>
<keyword id="KW-0879">Wnt signaling pathway</keyword>
<reference key="1">
    <citation type="journal article" date="1984" name="Cell">
        <title>Structure and nucleotide sequence of the putative mammary oncogene int-1; proviral insertions leave the protein-encoding domain intact.</title>
        <authorList>
            <person name="Ooyen A.V."/>
            <person name="Nusse R."/>
        </authorList>
    </citation>
    <scope>NUCLEOTIDE SEQUENCE [GENOMIC DNA]</scope>
    <source>
        <strain>C3H/HeJ</strain>
    </source>
</reference>
<reference key="2">
    <citation type="journal article" date="1985" name="Mol. Cell. Biol.">
        <title>Nucleotide sequence and expression in vitro of cDNA derived from mRNA of int-1, a provirally activated mouse mammary oncogene.</title>
        <authorList>
            <person name="Fung Y.-K.T."/>
            <person name="Shackleford G.M."/>
            <person name="Brown A.M.C."/>
            <person name="Sanders G.S."/>
            <person name="Varmus H.E."/>
        </authorList>
    </citation>
    <scope>NUCLEOTIDE SEQUENCE [MRNA]</scope>
</reference>
<reference key="3">
    <citation type="journal article" date="1990" name="Genes Dev.">
        <title>Expression of multiple novel Wnt-1/int-1-related genes during fetal and adult mouse development.</title>
        <authorList>
            <person name="Gavin B.J."/>
            <person name="McMahon J.A."/>
            <person name="McMahon A.P."/>
        </authorList>
    </citation>
    <scope>NUCLEOTIDE SEQUENCE [MRNA]</scope>
</reference>
<reference key="4">
    <citation type="journal article" date="2004" name="Genome Res.">
        <title>The status, quality, and expansion of the NIH full-length cDNA project: the Mammalian Gene Collection (MGC).</title>
        <authorList>
            <consortium name="The MGC Project Team"/>
        </authorList>
    </citation>
    <scope>NUCLEOTIDE SEQUENCE [LARGE SCALE MRNA]</scope>
    <source>
        <strain>Czech II</strain>
    </source>
</reference>
<reference key="5">
    <citation type="journal article" date="1990" name="Nature">
        <title>Targeted disruption of the murine int-1 proto-oncogene resulting in severe abnormalities in midbrain and cerebellar development.</title>
        <authorList>
            <person name="Thomas K.R."/>
            <person name="Capecchi M.R."/>
        </authorList>
    </citation>
    <scope>FUNCTION</scope>
    <scope>DISRUPTION PHENOTYPE</scope>
</reference>
<reference key="6">
    <citation type="journal article" date="1987" name="Cell">
        <title>Expression of the proto-oncogene int-1 is restricted to specific neural cells in the developing mouse embryo.</title>
        <authorList>
            <person name="Wilkinson D.G."/>
            <person name="Bailes J.A."/>
            <person name="McMahon A.P."/>
        </authorList>
    </citation>
    <scope>DEVELOPMENTAL STAGE</scope>
    <source>
        <strain>CBA/CaJ</strain>
        <tissue>Embryo</tissue>
    </source>
</reference>
<reference key="7">
    <citation type="journal article" date="1987" name="Cell">
        <title>Expression of the proto-oncogene int-1 is restricted to postmeiotic male germ cells and the neural tube of mid-gestational embryos.</title>
        <authorList>
            <person name="Shackleford G.M."/>
            <person name="Varmus H.E."/>
        </authorList>
    </citation>
    <scope>TISSUE SPECIFICITY</scope>
    <source>
        <strain>ICR</strain>
    </source>
</reference>
<reference key="8">
    <citation type="journal article" date="2000" name="Eur. J. Biochem.">
        <title>The evolutionarily conserved porcupine gene family is involved in the processing of the Wnt family.</title>
        <authorList>
            <person name="Tanaka K."/>
            <person name="Okabayashi H."/>
            <person name="Asashima M."/>
            <person name="Perrimon N."/>
            <person name="Kadowaki T."/>
        </authorList>
    </citation>
    <scope>INTERACTION WITH PORCN</scope>
</reference>
<reference key="9">
    <citation type="journal article" date="2004" name="Cell">
        <title>Mammalian Ryk is a Wnt coreceptor required for stimulation of neurite outgrowth.</title>
        <authorList>
            <person name="Lu W."/>
            <person name="Yamamoto V."/>
            <person name="Ortega B."/>
            <person name="Baltimore D."/>
        </authorList>
    </citation>
    <scope>FUNCTION</scope>
</reference>
<reference key="10">
    <citation type="journal article" date="2005" name="Nat. Neurosci.">
        <title>Ryk-mediated Wnt repulsion regulates posterior-directed growth of corticospinal tract.</title>
        <authorList>
            <person name="Liu Y."/>
            <person name="Shi J."/>
            <person name="Lu C.C."/>
            <person name="Wang Z.B."/>
            <person name="Lyuksyutova A.I."/>
            <person name="Song X.J."/>
            <person name="Zou Y."/>
        </authorList>
    </citation>
    <scope>FUNCTION</scope>
</reference>
<reference key="11">
    <citation type="journal article" date="2006" name="J. Biol. Chem.">
        <title>Mouse cristin/R-spondin family proteins are novel ligands for the Frizzled 8 and LRP6 receptors and activate beta-catenin-dependent gene expression.</title>
        <authorList>
            <person name="Nam J.-S."/>
            <person name="Turcotte T.J."/>
            <person name="Smith P.F."/>
            <person name="Choi S."/>
            <person name="Yoon J.K."/>
        </authorList>
    </citation>
    <scope>INTERACTION WITH RSPO1; RSPO2 AND RSPO3</scope>
</reference>
<reference key="12">
    <citation type="journal article" date="2009" name="Proc. Natl. Acad. Sci. U.S.A.">
        <title>Reciprocal regulation of Wnt and Gpr177/mouse Wntless is required for embryonic axis formation.</title>
        <authorList>
            <person name="Fu J."/>
            <person name="Jiang M."/>
            <person name="Mirando A.J."/>
            <person name="Yu H.-M."/>
            <person name="Hsu W."/>
        </authorList>
    </citation>
    <scope>INTERACTION WITH WLS</scope>
</reference>
<reference key="13">
    <citation type="journal article" date="2013" name="Am. J. Hum. Genet.">
        <title>Mutations in WNT1 cause different forms of bone fragility.</title>
        <authorList>
            <person name="Keupp K."/>
            <person name="Beleggia F."/>
            <person name="Kayserili H."/>
            <person name="Barnes A.M."/>
            <person name="Steiner M."/>
            <person name="Semler O."/>
            <person name="Fischer B."/>
            <person name="Yigit G."/>
            <person name="Janda C.Y."/>
            <person name="Becker J."/>
            <person name="Breer S."/>
            <person name="Altunoglu U."/>
            <person name="Gruenhagen J."/>
            <person name="Krawitz P."/>
            <person name="Hecht J."/>
            <person name="Schinke T."/>
            <person name="Makareeva E."/>
            <person name="Lausch E."/>
            <person name="Cankaya T."/>
            <person name="Caparros-Martin J.A."/>
            <person name="Lapunzina P."/>
            <person name="Temtamy S."/>
            <person name="Aglan M."/>
            <person name="Zabel B."/>
            <person name="Eysel P."/>
            <person name="Koerber F."/>
            <person name="Leikin S."/>
            <person name="Garcia K.C."/>
            <person name="Netzer C."/>
            <person name="Schoenau E."/>
            <person name="Ruiz-Perez V.L."/>
            <person name="Mundlos S."/>
            <person name="Amling M."/>
            <person name="Kornak U."/>
            <person name="Marini J."/>
            <person name="Wollnik B."/>
        </authorList>
    </citation>
    <scope>TISSUE SPECIFICITY</scope>
</reference>
<reference key="14">
    <citation type="journal article" date="2013" name="N. Engl. J. Med.">
        <title>WNT1 mutations in early-onset osteoporosis and osteogenesis imperfecta.</title>
        <authorList>
            <person name="Laine C.M."/>
            <person name="Joeng K.S."/>
            <person name="Campeau P.M."/>
            <person name="Kiviranta R."/>
            <person name="Tarkkonen K."/>
            <person name="Grover M."/>
            <person name="Lu J.T."/>
            <person name="Pekkinen M."/>
            <person name="Wessman M."/>
            <person name="Heino T.J."/>
            <person name="Nieminen-Pihala V."/>
            <person name="Aronen M."/>
            <person name="Laine T."/>
            <person name="Kroeger H."/>
            <person name="Cole W.G."/>
            <person name="Lehesjoki A.E."/>
            <person name="Nevarez L."/>
            <person name="Krakow D."/>
            <person name="Curry C.J."/>
            <person name="Cohn D.H."/>
            <person name="Gibbs R.A."/>
            <person name="Lee B.H."/>
            <person name="Maekitie O."/>
        </authorList>
    </citation>
    <scope>TISSUE SPECIFICITY</scope>
</reference>
<organism>
    <name type="scientific">Mus musculus</name>
    <name type="common">Mouse</name>
    <dbReference type="NCBI Taxonomy" id="10090"/>
    <lineage>
        <taxon>Eukaryota</taxon>
        <taxon>Metazoa</taxon>
        <taxon>Chordata</taxon>
        <taxon>Craniata</taxon>
        <taxon>Vertebrata</taxon>
        <taxon>Euteleostomi</taxon>
        <taxon>Mammalia</taxon>
        <taxon>Eutheria</taxon>
        <taxon>Euarchontoglires</taxon>
        <taxon>Glires</taxon>
        <taxon>Rodentia</taxon>
        <taxon>Myomorpha</taxon>
        <taxon>Muroidea</taxon>
        <taxon>Muridae</taxon>
        <taxon>Murinae</taxon>
        <taxon>Mus</taxon>
        <taxon>Mus</taxon>
    </lineage>
</organism>
<feature type="signal peptide" evidence="5">
    <location>
        <begin position="1"/>
        <end position="27"/>
    </location>
</feature>
<feature type="chain" id="PRO_0000041406" description="Proto-oncogene Wnt-1">
    <location>
        <begin position="28"/>
        <end position="370"/>
    </location>
</feature>
<feature type="lipid moiety-binding region" description="O-palmitoleoyl serine; by PORCN" evidence="4">
    <location>
        <position position="224"/>
    </location>
</feature>
<feature type="glycosylation site" description="N-linked (GlcNAc...) asparagine" evidence="5">
    <location>
        <position position="29"/>
    </location>
</feature>
<feature type="glycosylation site" description="N-linked (GlcNAc...) asparagine" evidence="5">
    <location>
        <position position="316"/>
    </location>
</feature>
<feature type="glycosylation site" description="N-linked (GlcNAc...) asparagine" evidence="5">
    <location>
        <position position="346"/>
    </location>
</feature>
<feature type="glycosylation site" description="N-linked (GlcNAc...) asparagine" evidence="5">
    <location>
        <position position="359"/>
    </location>
</feature>
<feature type="disulfide bond" evidence="2">
    <location>
        <begin position="93"/>
        <end position="104"/>
    </location>
</feature>
<feature type="disulfide bond" evidence="2">
    <location>
        <begin position="143"/>
        <end position="151"/>
    </location>
</feature>
<feature type="disulfide bond" evidence="2">
    <location>
        <begin position="153"/>
        <end position="170"/>
    </location>
</feature>
<feature type="disulfide bond" evidence="2">
    <location>
        <begin position="218"/>
        <end position="232"/>
    </location>
</feature>
<feature type="disulfide bond" evidence="2">
    <location>
        <begin position="220"/>
        <end position="227"/>
    </location>
</feature>
<feature type="disulfide bond" evidence="2">
    <location>
        <begin position="299"/>
        <end position="330"/>
    </location>
</feature>
<feature type="disulfide bond" evidence="2">
    <location>
        <begin position="315"/>
        <end position="325"/>
    </location>
</feature>
<feature type="disulfide bond" evidence="2">
    <location>
        <begin position="329"/>
        <end position="369"/>
    </location>
</feature>
<feature type="disulfide bond" evidence="2">
    <location>
        <begin position="345"/>
        <end position="360"/>
    </location>
</feature>
<feature type="disulfide bond" evidence="2">
    <location>
        <begin position="347"/>
        <end position="357"/>
    </location>
</feature>
<feature type="disulfide bond" evidence="2">
    <location>
        <begin position="352"/>
        <end position="353"/>
    </location>
</feature>
<accession>P04426</accession>
<comment type="function">
    <text evidence="1 7 8 11">Ligand for members of the frizzled family of seven transmembrane receptors. Acts in the canonical Wnt signaling pathway by promoting beta-catenin-dependent transcriptional activation (By similarity). In some developmental processes, is also a ligand for the coreceptor RYK, thus triggering Wnt signaling (PubMed:15454084, PubMed:16116452). Plays an essential role in the development of the embryonic brain and central nervous system (CNS) (PubMed:16116452, PubMed:2202907). Has a role in osteoblast function, bone development and bone homeostasis (By similarity).</text>
</comment>
<comment type="subunit">
    <text evidence="1 6 9 10">Forms a soluble 1:1 complex with AFM; this prevents oligomerization and is required for prolonged biological activity. The complex with AFM may represent the physiological form in body fluids (By similarity). Interacts with PORCN (PubMed:10866835). Interacts with RSPO1, RSPO2 and RSPO3 (PubMed:16543246). Interacts with WLS (PubMed:19841259).</text>
</comment>
<comment type="interaction">
    <interactant intactId="EBI-1570911">
        <id>P04426</id>
    </interactant>
    <interactant intactId="EBI-1570828">
        <id>O35082</id>
        <label>Kl</label>
    </interactant>
    <organismsDiffer>false</organismsDiffer>
    <experiments>2</experiments>
</comment>
<comment type="interaction">
    <interactant intactId="EBI-1570911">
        <id>P04426</id>
    </interactant>
    <interactant intactId="EBI-15811068">
        <id>Q6DID7-1</id>
        <label>Wls</label>
    </interactant>
    <organismsDiffer>false</organismsDiffer>
    <experiments>2</experiments>
</comment>
<comment type="interaction">
    <interactant intactId="EBI-1570911">
        <id>P04426</id>
    </interactant>
    <interactant intactId="EBI-910915">
        <id>O75581</id>
        <label>LRP6</label>
    </interactant>
    <organismsDiffer>true</organismsDiffer>
    <experiments>2</experiments>
</comment>
<comment type="subcellular location">
    <subcellularLocation>
        <location evidence="1">Secreted</location>
        <location evidence="1">Extracellular space</location>
        <location evidence="1">Extracellular matrix</location>
    </subcellularLocation>
    <subcellularLocation>
        <location evidence="1">Secreted</location>
    </subcellularLocation>
</comment>
<comment type="tissue specificity">
    <text evidence="12 13 15">Testis and mid-gestational embryos. In the testis, detected only in postmeiotic germ cells undergoing differentiation from round spermatids into mature spermatozoa. In the embryos, expression is restricted to the developing CNS in regions of the neural tube other than the telencephalon. Expressed in osteoblast; expression levels increase with advancing osteoblast differentiation. Expressed in the brain, femur, spleen, and hematopoietic bone marrow.</text>
</comment>
<comment type="developmental stage">
    <text evidence="14">Accumulates throughout the neural plate at the anterior head folds of the 9 day embryo but only at its lateral tips in more posterior regions. Following neural tube closure, expression is restricted to specific regions of the dorsal wall of the brain ventricles and spinal cord, the ventral wall of the midbrain and the diencephalon, and the lateral walls of the neuroepithelium at the midbrain-hindbrain junction.</text>
</comment>
<comment type="PTM">
    <text evidence="3 4">Palmitoleoylation is required for efficient binding to frizzled receptors. Palmitoleoylation is necessary for proper trafficking to cell surface (By similarity). Depalmitoleoylated by NOTUM, leading to inhibit Wnt signaling pathway (By similarity).</text>
</comment>
<comment type="disruption phenotype">
    <text evidence="11">Important perinatal lethality, due to defects in brain development. After 14.5 dpc, embryos display dramatic malformations of the mesencephalon and metencephalon, and especially the cerebellum. They show mild midbrain hydrocephaly by 17.5 dpc. Only one out of ten live-born pups survives more than 30 days; these mice respond normally to light, sound, smell and touch, but display severe ataxia.</text>
</comment>
<comment type="miscellaneous">
    <text evidence="16">Many mouse mammary tumors induced by mouse mammary tumor virus (MMTV) contain a provirus integrated into a host cell region which has been named INT-1 (now Wnt1).</text>
</comment>
<comment type="similarity">
    <text evidence="20">Belongs to the Wnt family.</text>
</comment>
<comment type="caution">
    <text evidence="1">A palmitoylation site was proposed at Cys-93, but it was later shown that this cysteine is engaged in a disulfide bond.</text>
</comment>
<sequence>MGLWALLPSWVSTTLLLALTALPAALAANSSGRWWGIVNIASSTNLLTDSKSLQLVLEPSLQLLSRKQRRLIRQNPGILHSVSGGLQSAVRECKWQFRNRRWNCPTAPGPHLFGKIVNRGCRETAFIFAITSAGVTHSVARSCSEGSIESCTCDYRRRGPGGPDWHWGGCSDNIDFGRLFGREFVDSGEKGRDLRFLMNLHNNEAGRTTVFSEMRQECKCHGMSGSCTVRTCWMRLPTLRAVGDVLRDRFDGASRVLYGNRGSNRASRAELLRLEPEDPAHKPPSPHDLVYFEKSPNFCTYSGRLGTAGTAGRACNSSSPALDGCELLCCGRGHRTRTQRVTERCNCTFHWCCHVSCRNCTHTRVLHECL</sequence>